<gene>
    <name evidence="1" type="primary">thi4</name>
    <name type="ordered locus">VNG_2604G</name>
</gene>
<keyword id="KW-0408">Iron</keyword>
<keyword id="KW-0479">Metal-binding</keyword>
<keyword id="KW-0520">NAD</keyword>
<keyword id="KW-1185">Reference proteome</keyword>
<keyword id="KW-0784">Thiamine biosynthesis</keyword>
<keyword id="KW-0808">Transferase</keyword>
<sequence length="310" mass="32681">MTFDSFADANEAEVTRAITRQWTDEFLDDTETDVIIVGGGPSGLMAAKELADRDVDVTIIEKNNYLGGGFWLGGFLMNKLTVRSPAEAVLDDLGVPYEYDEENDGLAVADAPHACSAMITAACDAGARIQNMTEFTDIVVRDDHAVAGAVVNWTPVHSLPRELTCVDPIALEADVVVDATGHDAVVVSKLHERGVLEADGIEHVEEHATGMDQSGDGEYGAPGHDSPGHDSMWVADSEDKVVEQTGKVHDGLVTAGLSTATVHGLTRMGPTFGAMLLSGKVAANAVMDELAVDEPRVDLPSTAAPAADDD</sequence>
<feature type="chain" id="PRO_0000153945" description="Thiamine thiazole synthase">
    <location>
        <begin position="1"/>
        <end position="310"/>
    </location>
</feature>
<feature type="binding site" description="in other chain" evidence="1">
    <location>
        <position position="42"/>
    </location>
    <ligand>
        <name>NAD(+)</name>
        <dbReference type="ChEBI" id="CHEBI:57540"/>
        <note>ligand shared between two adjacent protomers</note>
    </ligand>
</feature>
<feature type="binding site" description="in other chain" evidence="1">
    <location>
        <begin position="61"/>
        <end position="62"/>
    </location>
    <ligand>
        <name>NAD(+)</name>
        <dbReference type="ChEBI" id="CHEBI:57540"/>
        <note>ligand shared between two adjacent protomers</note>
    </ligand>
</feature>
<feature type="binding site" description="in other chain" evidence="1">
    <location>
        <position position="69"/>
    </location>
    <ligand>
        <name>NAD(+)</name>
        <dbReference type="ChEBI" id="CHEBI:57540"/>
        <note>ligand shared between two adjacent protomers</note>
    </ligand>
</feature>
<feature type="binding site" evidence="1">
    <location>
        <position position="167"/>
    </location>
    <ligand>
        <name>Fe cation</name>
        <dbReference type="ChEBI" id="CHEBI:24875"/>
        <note>ligand shared between two adjacent protomers</note>
    </ligand>
</feature>
<feature type="binding site" evidence="1">
    <location>
        <position position="167"/>
    </location>
    <ligand>
        <name>NAD(+)</name>
        <dbReference type="ChEBI" id="CHEBI:57540"/>
        <note>ligand shared between two adjacent protomers</note>
    </ligand>
</feature>
<feature type="binding site" description="in other chain" evidence="1">
    <location>
        <position position="182"/>
    </location>
    <ligand>
        <name>Fe cation</name>
        <dbReference type="ChEBI" id="CHEBI:24875"/>
        <note>ligand shared between two adjacent protomers</note>
    </ligand>
</feature>
<feature type="binding site" description="in other chain" evidence="1">
    <location>
        <position position="257"/>
    </location>
    <ligand>
        <name>NAD(+)</name>
        <dbReference type="ChEBI" id="CHEBI:57540"/>
        <note>ligand shared between two adjacent protomers</note>
    </ligand>
</feature>
<feature type="binding site" evidence="1">
    <location>
        <position position="267"/>
    </location>
    <ligand>
        <name>glycine</name>
        <dbReference type="ChEBI" id="CHEBI:57305"/>
    </ligand>
</feature>
<feature type="modified residue" description="2,3-didehydroalanine (Cys)" evidence="1">
    <location>
        <position position="165"/>
    </location>
</feature>
<comment type="function">
    <text evidence="1">Involved in biosynthesis of the thiamine precursor thiazole. Catalyzes the conversion of NAD and glycine to adenosine diphosphate 5-(2-hydroxyethyl)-4-methylthiazole-2-carboxylic acid (ADT), an adenylated thiazole intermediate. The reaction includes an iron-dependent sulfide transfer from a conserved cysteine residue of the protein to a thiazole intermediate. The enzyme can only undergo a single turnover, which suggests it is a suicide enzyme.</text>
</comment>
<comment type="catalytic activity">
    <reaction evidence="1">
        <text>[ADP-thiazole synthase]-L-cysteine + glycine + NAD(+) = [ADP-thiazole synthase]-dehydroalanine + ADP-5-ethyl-4-methylthiazole-2-carboxylate + nicotinamide + 3 H2O + 2 H(+)</text>
        <dbReference type="Rhea" id="RHEA:55708"/>
        <dbReference type="Rhea" id="RHEA-COMP:14264"/>
        <dbReference type="Rhea" id="RHEA-COMP:14265"/>
        <dbReference type="ChEBI" id="CHEBI:15377"/>
        <dbReference type="ChEBI" id="CHEBI:15378"/>
        <dbReference type="ChEBI" id="CHEBI:17154"/>
        <dbReference type="ChEBI" id="CHEBI:29950"/>
        <dbReference type="ChEBI" id="CHEBI:57305"/>
        <dbReference type="ChEBI" id="CHEBI:57540"/>
        <dbReference type="ChEBI" id="CHEBI:90873"/>
        <dbReference type="ChEBI" id="CHEBI:139151"/>
        <dbReference type="EC" id="2.4.2.60"/>
    </reaction>
</comment>
<comment type="cofactor">
    <cofactor evidence="1">
        <name>Fe(2+)</name>
        <dbReference type="ChEBI" id="CHEBI:29033"/>
    </cofactor>
</comment>
<comment type="pathway">
    <text evidence="1">Cofactor biosynthesis; thiamine diphosphate biosynthesis.</text>
</comment>
<comment type="subunit">
    <text evidence="1">Homooctamer; tetramer of dimers.</text>
</comment>
<comment type="PTM">
    <text evidence="1">During the catalytic reaction, a sulfide is transferred from Cys-165 to a reaction intermediate, generating a dehydroalanine residue.</text>
</comment>
<comment type="similarity">
    <text evidence="1">Belongs to the THI4 family.</text>
</comment>
<comment type="sequence caution" evidence="2">
    <conflict type="erroneous initiation">
        <sequence resource="EMBL-CDS" id="AAG20644"/>
    </conflict>
</comment>
<accession>Q9HMC7</accession>
<dbReference type="EC" id="2.4.2.60" evidence="1"/>
<dbReference type="EMBL" id="AE004437">
    <property type="protein sequence ID" value="AAG20644.1"/>
    <property type="status" value="ALT_INIT"/>
    <property type="molecule type" value="Genomic_DNA"/>
</dbReference>
<dbReference type="PIR" id="H84409">
    <property type="entry name" value="H84409"/>
</dbReference>
<dbReference type="RefSeq" id="WP_010903946.1">
    <property type="nucleotide sequence ID" value="NC_002607.1"/>
</dbReference>
<dbReference type="SMR" id="Q9HMC7"/>
<dbReference type="FunCoup" id="Q9HMC7">
    <property type="interactions" value="83"/>
</dbReference>
<dbReference type="STRING" id="64091.VNG_2604G"/>
<dbReference type="PaxDb" id="64091-VNG_2604G"/>
<dbReference type="KEGG" id="hal:VNG_2604G"/>
<dbReference type="PATRIC" id="fig|64091.14.peg.2017"/>
<dbReference type="HOGENOM" id="CLU_053727_2_0_2"/>
<dbReference type="InParanoid" id="Q9HMC7"/>
<dbReference type="OrthoDB" id="4240at2157"/>
<dbReference type="PhylomeDB" id="Q9HMC7"/>
<dbReference type="UniPathway" id="UPA00060"/>
<dbReference type="Proteomes" id="UP000000554">
    <property type="component" value="Chromosome"/>
</dbReference>
<dbReference type="GO" id="GO:0160205">
    <property type="term" value="F:cysteine-dependent adenosine diphosphate thiazole synthase activity"/>
    <property type="evidence" value="ECO:0007669"/>
    <property type="project" value="RHEA"/>
</dbReference>
<dbReference type="GO" id="GO:0005506">
    <property type="term" value="F:iron ion binding"/>
    <property type="evidence" value="ECO:0000318"/>
    <property type="project" value="GO_Central"/>
</dbReference>
<dbReference type="GO" id="GO:0009228">
    <property type="term" value="P:thiamine biosynthetic process"/>
    <property type="evidence" value="ECO:0007669"/>
    <property type="project" value="UniProtKB-KW"/>
</dbReference>
<dbReference type="GO" id="GO:0009229">
    <property type="term" value="P:thiamine diphosphate biosynthetic process"/>
    <property type="evidence" value="ECO:0007669"/>
    <property type="project" value="UniProtKB-UniRule"/>
</dbReference>
<dbReference type="GO" id="GO:0052837">
    <property type="term" value="P:thiazole biosynthetic process"/>
    <property type="evidence" value="ECO:0000318"/>
    <property type="project" value="GO_Central"/>
</dbReference>
<dbReference type="Gene3D" id="3.50.50.60">
    <property type="entry name" value="FAD/NAD(P)-binding domain"/>
    <property type="match status" value="1"/>
</dbReference>
<dbReference type="HAMAP" id="MF_00304">
    <property type="entry name" value="Thi4"/>
    <property type="match status" value="1"/>
</dbReference>
<dbReference type="InterPro" id="IPR036188">
    <property type="entry name" value="FAD/NAD-bd_sf"/>
</dbReference>
<dbReference type="InterPro" id="IPR002922">
    <property type="entry name" value="Thi4_fam"/>
</dbReference>
<dbReference type="InterPro" id="IPR022828">
    <property type="entry name" value="Thi4_prok"/>
</dbReference>
<dbReference type="NCBIfam" id="TIGR00292">
    <property type="entry name" value="sulfide-dependent adenosine diphosphate thiazole synthase"/>
    <property type="match status" value="1"/>
</dbReference>
<dbReference type="PANTHER" id="PTHR43422">
    <property type="entry name" value="THIAMINE THIAZOLE SYNTHASE"/>
    <property type="match status" value="1"/>
</dbReference>
<dbReference type="PANTHER" id="PTHR43422:SF3">
    <property type="entry name" value="THIAMINE THIAZOLE SYNTHASE"/>
    <property type="match status" value="1"/>
</dbReference>
<dbReference type="Pfam" id="PF01946">
    <property type="entry name" value="Thi4"/>
    <property type="match status" value="2"/>
</dbReference>
<dbReference type="PRINTS" id="PR00411">
    <property type="entry name" value="PNDRDTASEI"/>
</dbReference>
<dbReference type="SUPFAM" id="SSF51905">
    <property type="entry name" value="FAD/NAD(P)-binding domain"/>
    <property type="match status" value="1"/>
</dbReference>
<evidence type="ECO:0000255" key="1">
    <source>
        <dbReference type="HAMAP-Rule" id="MF_00304"/>
    </source>
</evidence>
<evidence type="ECO:0000305" key="2"/>
<name>THI4_HALSA</name>
<proteinExistence type="inferred from homology"/>
<protein>
    <recommendedName>
        <fullName evidence="1">Thiamine thiazole synthase</fullName>
        <ecNumber evidence="1">2.4.2.60</ecNumber>
    </recommendedName>
</protein>
<reference key="1">
    <citation type="journal article" date="2000" name="Proc. Natl. Acad. Sci. U.S.A.">
        <title>Genome sequence of Halobacterium species NRC-1.</title>
        <authorList>
            <person name="Ng W.V."/>
            <person name="Kennedy S.P."/>
            <person name="Mahairas G.G."/>
            <person name="Berquist B."/>
            <person name="Pan M."/>
            <person name="Shukla H.D."/>
            <person name="Lasky S.R."/>
            <person name="Baliga N.S."/>
            <person name="Thorsson V."/>
            <person name="Sbrogna J."/>
            <person name="Swartzell S."/>
            <person name="Weir D."/>
            <person name="Hall J."/>
            <person name="Dahl T.A."/>
            <person name="Welti R."/>
            <person name="Goo Y.A."/>
            <person name="Leithauser B."/>
            <person name="Keller K."/>
            <person name="Cruz R."/>
            <person name="Danson M.J."/>
            <person name="Hough D.W."/>
            <person name="Maddocks D.G."/>
            <person name="Jablonski P.E."/>
            <person name="Krebs M.P."/>
            <person name="Angevine C.M."/>
            <person name="Dale H."/>
            <person name="Isenbarger T.A."/>
            <person name="Peck R.F."/>
            <person name="Pohlschroder M."/>
            <person name="Spudich J.L."/>
            <person name="Jung K.-H."/>
            <person name="Alam M."/>
            <person name="Freitas T."/>
            <person name="Hou S."/>
            <person name="Daniels C.J."/>
            <person name="Dennis P.P."/>
            <person name="Omer A.D."/>
            <person name="Ebhardt H."/>
            <person name="Lowe T.M."/>
            <person name="Liang P."/>
            <person name="Riley M."/>
            <person name="Hood L."/>
            <person name="DasSarma S."/>
        </authorList>
    </citation>
    <scope>NUCLEOTIDE SEQUENCE [LARGE SCALE GENOMIC DNA]</scope>
    <source>
        <strain>ATCC 700922 / JCM 11081 / NRC-1</strain>
    </source>
</reference>
<organism>
    <name type="scientific">Halobacterium salinarum (strain ATCC 700922 / JCM 11081 / NRC-1)</name>
    <name type="common">Halobacterium halobium</name>
    <dbReference type="NCBI Taxonomy" id="64091"/>
    <lineage>
        <taxon>Archaea</taxon>
        <taxon>Methanobacteriati</taxon>
        <taxon>Methanobacteriota</taxon>
        <taxon>Stenosarchaea group</taxon>
        <taxon>Halobacteria</taxon>
        <taxon>Halobacteriales</taxon>
        <taxon>Halobacteriaceae</taxon>
        <taxon>Halobacterium</taxon>
        <taxon>Halobacterium salinarum NRC-34001</taxon>
    </lineage>
</organism>